<feature type="signal peptide" evidence="1">
    <location>
        <begin position="1"/>
        <end position="17"/>
    </location>
</feature>
<feature type="chain" id="PRO_0000017071" description="Laminin subunit beta-3">
    <location>
        <begin position="18"/>
        <end position="1172"/>
    </location>
</feature>
<feature type="domain" description="Laminin N-terminal" evidence="3">
    <location>
        <begin position="22"/>
        <end position="249"/>
    </location>
</feature>
<feature type="domain" description="Laminin EGF-like 1" evidence="2">
    <location>
        <begin position="250"/>
        <end position="315"/>
    </location>
</feature>
<feature type="domain" description="Laminin EGF-like 2" evidence="2">
    <location>
        <begin position="316"/>
        <end position="378"/>
    </location>
</feature>
<feature type="domain" description="Laminin EGF-like 3" evidence="2">
    <location>
        <begin position="379"/>
        <end position="430"/>
    </location>
</feature>
<feature type="domain" description="Laminin EGF-like 4" evidence="2">
    <location>
        <begin position="431"/>
        <end position="480"/>
    </location>
</feature>
<feature type="domain" description="Laminin EGF-like 5" evidence="2">
    <location>
        <begin position="481"/>
        <end position="533"/>
    </location>
</feature>
<feature type="domain" description="Laminin EGF-like 6" evidence="2">
    <location>
        <begin position="534"/>
        <end position="580"/>
    </location>
</feature>
<feature type="region of interest" description="Domain II">
    <location>
        <begin position="579"/>
        <end position="785"/>
    </location>
</feature>
<feature type="region of interest" description="Domain alpha">
    <location>
        <begin position="786"/>
        <end position="816"/>
    </location>
</feature>
<feature type="region of interest" description="Domain I">
    <location>
        <begin position="817"/>
        <end position="1170"/>
    </location>
</feature>
<feature type="coiled-coil region" evidence="1">
    <location>
        <begin position="723"/>
        <end position="757"/>
    </location>
</feature>
<feature type="coiled-coil region" evidence="1">
    <location>
        <begin position="831"/>
        <end position="884"/>
    </location>
</feature>
<feature type="coiled-coil region" evidence="1">
    <location>
        <begin position="948"/>
        <end position="1133"/>
    </location>
</feature>
<feature type="glycosylation site" description="N-linked (GlcNAc...) asparagine" evidence="1">
    <location>
        <position position="220"/>
    </location>
</feature>
<feature type="glycosylation site" description="N-linked (GlcNAc...) asparagine" evidence="1">
    <location>
        <position position="604"/>
    </location>
</feature>
<feature type="glycosylation site" description="N-linked (GlcNAc...) asparagine" evidence="1">
    <location>
        <position position="810"/>
    </location>
</feature>
<feature type="disulfide bond" evidence="2">
    <location>
        <begin position="250"/>
        <end position="259"/>
    </location>
</feature>
<feature type="disulfide bond" evidence="2">
    <location>
        <begin position="252"/>
        <end position="279"/>
    </location>
</feature>
<feature type="disulfide bond" evidence="2">
    <location>
        <begin position="281"/>
        <end position="290"/>
    </location>
</feature>
<feature type="disulfide bond" evidence="2">
    <location>
        <begin position="293"/>
        <end position="313"/>
    </location>
</feature>
<feature type="disulfide bond" evidence="2">
    <location>
        <begin position="316"/>
        <end position="325"/>
    </location>
</feature>
<feature type="disulfide bond" evidence="2">
    <location>
        <begin position="318"/>
        <end position="343"/>
    </location>
</feature>
<feature type="disulfide bond" evidence="2">
    <location>
        <begin position="346"/>
        <end position="355"/>
    </location>
</feature>
<feature type="disulfide bond" evidence="2">
    <location>
        <begin position="358"/>
        <end position="376"/>
    </location>
</feature>
<feature type="disulfide bond" evidence="2">
    <location>
        <begin position="379"/>
        <end position="392"/>
    </location>
</feature>
<feature type="disulfide bond" evidence="2">
    <location>
        <begin position="381"/>
        <end position="399"/>
    </location>
</feature>
<feature type="disulfide bond" evidence="2">
    <location>
        <begin position="401"/>
        <end position="410"/>
    </location>
</feature>
<feature type="disulfide bond" evidence="2">
    <location>
        <begin position="413"/>
        <end position="428"/>
    </location>
</feature>
<feature type="disulfide bond" evidence="2">
    <location>
        <begin position="431"/>
        <end position="444"/>
    </location>
</feature>
<feature type="disulfide bond" evidence="2">
    <location>
        <begin position="433"/>
        <end position="451"/>
    </location>
</feature>
<feature type="disulfide bond" evidence="2">
    <location>
        <begin position="453"/>
        <end position="462"/>
    </location>
</feature>
<feature type="disulfide bond" evidence="2">
    <location>
        <begin position="465"/>
        <end position="478"/>
    </location>
</feature>
<feature type="disulfide bond" evidence="2">
    <location>
        <begin position="481"/>
        <end position="493"/>
    </location>
</feature>
<feature type="disulfide bond" evidence="2">
    <location>
        <begin position="483"/>
        <end position="500"/>
    </location>
</feature>
<feature type="disulfide bond" evidence="2">
    <location>
        <begin position="502"/>
        <end position="511"/>
    </location>
</feature>
<feature type="disulfide bond" evidence="2">
    <location>
        <begin position="519"/>
        <end position="531"/>
    </location>
</feature>
<feature type="disulfide bond" evidence="2">
    <location>
        <begin position="534"/>
        <end position="546"/>
    </location>
</feature>
<feature type="disulfide bond" evidence="2">
    <location>
        <begin position="536"/>
        <end position="553"/>
    </location>
</feature>
<feature type="disulfide bond" evidence="2">
    <location>
        <begin position="555"/>
        <end position="564"/>
    </location>
</feature>
<feature type="disulfide bond" evidence="2">
    <location>
        <begin position="567"/>
        <end position="578"/>
    </location>
</feature>
<feature type="disulfide bond" description="Interchain" evidence="12">
    <location>
        <position position="581"/>
    </location>
</feature>
<feature type="disulfide bond" description="Interchain" evidence="12">
    <location>
        <position position="584"/>
    </location>
</feature>
<feature type="disulfide bond" description="Interchain" evidence="12">
    <location>
        <position position="1171"/>
    </location>
</feature>
<feature type="sequence variant" id="VAR_037309" description="In dbSNP:rs2235542.">
    <original>N</original>
    <variation>D</variation>
    <location>
        <position position="181"/>
    </location>
</feature>
<feature type="sequence variant" id="VAR_037310" description="In JEB1A; somatic second-site mutation; dbSNP:rs121912486." evidence="5">
    <original>G</original>
    <variation>A</variation>
    <location>
        <position position="199"/>
    </location>
</feature>
<feature type="sequence variant" id="VAR_037311" description="In JEB1A; somatic second-site mutation; dbSNP:rs121912487." evidence="5">
    <original>K</original>
    <variation>Q</variation>
    <location>
        <position position="207"/>
    </location>
</feature>
<feature type="sequence variant" id="VAR_004170" description="In JEB1A; dbSNP:rs121912482." evidence="5 10">
    <original>E</original>
    <variation>K</variation>
    <location>
        <position position="210"/>
    </location>
</feature>
<feature type="sequence variant" id="VAR_037312" description="In dbSNP:rs12091253.">
    <original>R</original>
    <variation>L</variation>
    <location>
        <position position="292"/>
    </location>
</feature>
<feature type="sequence variant" id="VAR_034060" description="In dbSNP:rs2229468.">
    <original>S</original>
    <variation>T</variation>
    <location>
        <position position="438"/>
    </location>
</feature>
<feature type="sequence variant" id="VAR_035820" description="In a colorectal cancer sample; somatic mutation; dbSNP:rs200895463." evidence="4">
    <original>R</original>
    <variation>C</variation>
    <location>
        <position position="450"/>
    </location>
</feature>
<feature type="sequence variant" id="VAR_037313" description="In dbSNP:rs2076349.">
    <original>V</original>
    <variation>M</variation>
    <location>
        <position position="527"/>
    </location>
</feature>
<feature type="sequence variant" id="VAR_004171" description="In JEB1B; dbSNP:rs201223111." evidence="9">
    <original>P</original>
    <variation>L</variation>
    <location>
        <position position="679"/>
    </location>
</feature>
<feature type="sequence variant" id="VAR_034061" description="In dbSNP:rs2229466.">
    <original>N</original>
    <variation>S</variation>
    <location>
        <position position="690"/>
    </location>
</feature>
<feature type="sequence variant" id="VAR_034062" description="In dbSNP:rs12748250." evidence="11">
    <original>M</original>
    <variation>L</variation>
    <location>
        <position position="852"/>
    </location>
</feature>
<feature type="sequence variant" id="VAR_037314" description="In dbSNP:rs2076222.">
    <original>A</original>
    <variation>D</variation>
    <location>
        <position position="926"/>
    </location>
</feature>
<feature type="sequence variant" id="VAR_034063" description="In dbSNP:rs2229467.">
    <original>R</original>
    <variation>W</variation>
    <location>
        <position position="988"/>
    </location>
</feature>
<feature type="sequence conflict" description="In Ref. 1; AAA61834." evidence="12" ref="1">
    <original>Q</original>
    <variation>R</variation>
    <location>
        <position position="124"/>
    </location>
</feature>
<feature type="sequence conflict" description="In Ref. 1; AAA61834." evidence="12" ref="1">
    <location>
        <position position="269"/>
    </location>
</feature>
<feature type="sequence conflict" description="In Ref. 1; AAA61834." evidence="12" ref="1">
    <original>P</original>
    <variation>A</variation>
    <location>
        <position position="388"/>
    </location>
</feature>
<feature type="sequence conflict" description="In Ref. 1; AAA61834." evidence="12" ref="1">
    <original>QG</original>
    <variation>RR</variation>
    <location>
        <begin position="426"/>
        <end position="427"/>
    </location>
</feature>
<feature type="sequence conflict" description="In Ref. 1; AAA61834." evidence="12" ref="1">
    <original>RD</original>
    <variation>E</variation>
    <location>
        <begin position="440"/>
        <end position="441"/>
    </location>
</feature>
<feature type="sequence conflict" description="In Ref. 3; BAA22263." evidence="12" ref="3">
    <original>LSPQCNQFTGQC</original>
    <variation>PQPTVQPVHRAV</variation>
    <location>
        <begin position="489"/>
        <end position="500"/>
    </location>
</feature>
<feature type="sequence conflict" description="In Ref. 1; AAA61834." evidence="12" ref="1">
    <original>R</original>
    <variation>P</variation>
    <location>
        <position position="603"/>
    </location>
</feature>
<feature type="sequence conflict" description="In Ref. 1; AAA61834." evidence="12" ref="1">
    <original>G</original>
    <variation>A</variation>
    <location>
        <position position="815"/>
    </location>
</feature>
<sequence length="1172" mass="129572">MRPFFLLCFALPGLLHAQQACSRGACYPPVGDLLVGRTRFLRASSTCGLTKPETYCTQYGEWQMKCCKCDSRQPHNYYSHRVENVASSSGPMRWWQSQNDVNPVSLQLDLDRRFQLQEVMMEFQGPMPAGMLIERSSDFGKTWRVYQYLAADCTSTFPRVRQGRPQSWQDVRCQSLPQRPNARLNGGKVQLNLMDLVSGIPATQSQKIQEVGEITNLRVNFTRLAPVPQRGYHPPSAYYAVSQLRLQGSCFCHGHADRCAPKPGASAGPSTAVQVHDVCVCQHNTAGPNCERCAPFYNNRPWRPAEGQDAHECQRCDCNGHSETCHFDPAVFAASQGAYGGVCDNCRDHTEGKNCERCQLHYFRNRRPGASIQETCISCECDPDGAVPGAPCDPVTGQCVCKEHVQGERCDLCKPGFTGLTYANPQGCHRCDCNILGSRRDMPCDEESGRCLCLPNVVGPKCDQCAPYHWKLASGQGCEPCACDPHNSLSPQCNQFTGQCPCREGFGGLMCSAAAIRQCPDRTYGDVATGCRACDCDFRGTEGPGCDKASGRCLCRPGLTGPRCDQCQRGYCNRYPVCVACHPCFQTYDADLREQALRFGRLRNATASLWSGPGLEDRGLASRILDAKSKIEQIRAVLSSPAVTEQEVAQVASAILSLRRTLQGLQLDLPLEEETLSLPRDLESLDRSFNGLLTMYQRKREQFEKISSADPSGAFRMLSTAYEQSAQAAQQVSDSSRLLDQLRDSRREAERLVRQAGGGGGTGSPKLVALRLEMSSLPDLTPTFNKLCGNSRQMACTPISCPGELCPQDNGTACGSRCRGVLPRAGGAFLMAGQVAEQLRGFNAQLQRTRQMIRAAEESASQIQSSAQRLETQVSASRSQMEEDVRRTRLLIQQVRDFLTDPDTDAATIQEVSEAVLALWLPTDSATVLQKMNEIQAIAARLPNVDLVLSQTKQDIARARRLQAEAEEARSRAHAVEGQVEDVVGNLRQGTVALQEAQDTMQGTSRSLRLIQDRVAEVQQVLRPAEKLVTSMTKQLGDFWTRMEELRHQARQQGAEAVQAQQLAEGASEQALSAQEGFERIKQKYAELKDRLGQSSMLGEQGARIQSVKTEAEELFGETMEMMDRMKDMELELLRGSQAIMLRSADLTGLEKRVEQIRDHINGRVLYYATCK</sequence>
<evidence type="ECO:0000255" key="1"/>
<evidence type="ECO:0000255" key="2">
    <source>
        <dbReference type="PROSITE-ProRule" id="PRU00460"/>
    </source>
</evidence>
<evidence type="ECO:0000255" key="3">
    <source>
        <dbReference type="PROSITE-ProRule" id="PRU00466"/>
    </source>
</evidence>
<evidence type="ECO:0000269" key="4">
    <source>
    </source>
</evidence>
<evidence type="ECO:0000269" key="5">
    <source>
    </source>
</evidence>
<evidence type="ECO:0000269" key="6">
    <source>
    </source>
</evidence>
<evidence type="ECO:0000269" key="7">
    <source>
    </source>
</evidence>
<evidence type="ECO:0000269" key="8">
    <source>
    </source>
</evidence>
<evidence type="ECO:0000269" key="9">
    <source>
    </source>
</evidence>
<evidence type="ECO:0000269" key="10">
    <source>
    </source>
</evidence>
<evidence type="ECO:0000269" key="11">
    <source ref="6"/>
</evidence>
<evidence type="ECO:0000305" key="12"/>
<gene>
    <name type="primary">LAMB3</name>
    <name type="synonym">LAMNB1</name>
</gene>
<reference key="1">
    <citation type="journal article" date="1994" name="J. Biol. Chem.">
        <title>The complete primary structure for a novel laminin chain, the laminin B1k chain.</title>
        <authorList>
            <person name="Gerecke D.R."/>
            <person name="Wagman D.W."/>
            <person name="Champliaud M.-F."/>
            <person name="Burgeson R.E."/>
        </authorList>
    </citation>
    <scope>NUCLEOTIDE SEQUENCE [MRNA]</scope>
    <scope>PROTEIN SEQUENCE OF 172-190</scope>
</reference>
<reference key="2">
    <citation type="journal article" date="1995" name="Genomics">
        <title>Cloning of the beta 3 chain gene (LAMB3) of human laminin 5, a candidate gene in junctional epidermolysis bullosa.</title>
        <authorList>
            <person name="Pulkkinen L."/>
            <person name="Gerecke D.R."/>
            <person name="Christiano A.M."/>
            <person name="Wagman D.W."/>
            <person name="Burgeson R.E."/>
            <person name="Uitto J."/>
        </authorList>
    </citation>
    <scope>NUCLEOTIDE SEQUENCE [GENOMIC DNA]</scope>
</reference>
<reference key="3">
    <citation type="journal article" date="1995" name="Genomics">
        <title>Chromosomal loci of 50 human keratinocyte cDNAs assigned by fluorescence in situ hybridization.</title>
        <authorList>
            <person name="Morishima Y."/>
            <person name="Ariyama T."/>
            <person name="Yamanishi K."/>
            <person name="Abe T."/>
            <person name="Ueda E."/>
            <person name="Yasuno H."/>
            <person name="Inazawa J."/>
        </authorList>
    </citation>
    <scope>NUCLEOTIDE SEQUENCE [MRNA]</scope>
    <source>
        <tissue>Epidermis</tissue>
    </source>
</reference>
<reference key="4">
    <citation type="journal article" date="2001" name="Proc. Natl. Acad. Sci. U.S.A.">
        <title>In vivo restoration of laminin 5 beta 3 expression and function in junctional epidermolysis bullosa.</title>
        <authorList>
            <person name="Robbins P.B."/>
            <person name="Lin Q."/>
            <person name="Goodnough J.B."/>
            <person name="Tian H."/>
            <person name="Chen X."/>
            <person name="Khavari P.A."/>
        </authorList>
    </citation>
    <scope>NUCLEOTIDE SEQUENCE [MRNA]</scope>
</reference>
<reference key="5">
    <citation type="journal article" date="2006" name="Nature">
        <title>The DNA sequence and biological annotation of human chromosome 1.</title>
        <authorList>
            <person name="Gregory S.G."/>
            <person name="Barlow K.F."/>
            <person name="McLay K.E."/>
            <person name="Kaul R."/>
            <person name="Swarbreck D."/>
            <person name="Dunham A."/>
            <person name="Scott C.E."/>
            <person name="Howe K.L."/>
            <person name="Woodfine K."/>
            <person name="Spencer C.C.A."/>
            <person name="Jones M.C."/>
            <person name="Gillson C."/>
            <person name="Searle S."/>
            <person name="Zhou Y."/>
            <person name="Kokocinski F."/>
            <person name="McDonald L."/>
            <person name="Evans R."/>
            <person name="Phillips K."/>
            <person name="Atkinson A."/>
            <person name="Cooper R."/>
            <person name="Jones C."/>
            <person name="Hall R.E."/>
            <person name="Andrews T.D."/>
            <person name="Lloyd C."/>
            <person name="Ainscough R."/>
            <person name="Almeida J.P."/>
            <person name="Ambrose K.D."/>
            <person name="Anderson F."/>
            <person name="Andrew R.W."/>
            <person name="Ashwell R.I.S."/>
            <person name="Aubin K."/>
            <person name="Babbage A.K."/>
            <person name="Bagguley C.L."/>
            <person name="Bailey J."/>
            <person name="Beasley H."/>
            <person name="Bethel G."/>
            <person name="Bird C.P."/>
            <person name="Bray-Allen S."/>
            <person name="Brown J.Y."/>
            <person name="Brown A.J."/>
            <person name="Buckley D."/>
            <person name="Burton J."/>
            <person name="Bye J."/>
            <person name="Carder C."/>
            <person name="Chapman J.C."/>
            <person name="Clark S.Y."/>
            <person name="Clarke G."/>
            <person name="Clee C."/>
            <person name="Cobley V."/>
            <person name="Collier R.E."/>
            <person name="Corby N."/>
            <person name="Coville G.J."/>
            <person name="Davies J."/>
            <person name="Deadman R."/>
            <person name="Dunn M."/>
            <person name="Earthrowl M."/>
            <person name="Ellington A.G."/>
            <person name="Errington H."/>
            <person name="Frankish A."/>
            <person name="Frankland J."/>
            <person name="French L."/>
            <person name="Garner P."/>
            <person name="Garnett J."/>
            <person name="Gay L."/>
            <person name="Ghori M.R.J."/>
            <person name="Gibson R."/>
            <person name="Gilby L.M."/>
            <person name="Gillett W."/>
            <person name="Glithero R.J."/>
            <person name="Grafham D.V."/>
            <person name="Griffiths C."/>
            <person name="Griffiths-Jones S."/>
            <person name="Grocock R."/>
            <person name="Hammond S."/>
            <person name="Harrison E.S.I."/>
            <person name="Hart E."/>
            <person name="Haugen E."/>
            <person name="Heath P.D."/>
            <person name="Holmes S."/>
            <person name="Holt K."/>
            <person name="Howden P.J."/>
            <person name="Hunt A.R."/>
            <person name="Hunt S.E."/>
            <person name="Hunter G."/>
            <person name="Isherwood J."/>
            <person name="James R."/>
            <person name="Johnson C."/>
            <person name="Johnson D."/>
            <person name="Joy A."/>
            <person name="Kay M."/>
            <person name="Kershaw J.K."/>
            <person name="Kibukawa M."/>
            <person name="Kimberley A.M."/>
            <person name="King A."/>
            <person name="Knights A.J."/>
            <person name="Lad H."/>
            <person name="Laird G."/>
            <person name="Lawlor S."/>
            <person name="Leongamornlert D.A."/>
            <person name="Lloyd D.M."/>
            <person name="Loveland J."/>
            <person name="Lovell J."/>
            <person name="Lush M.J."/>
            <person name="Lyne R."/>
            <person name="Martin S."/>
            <person name="Mashreghi-Mohammadi M."/>
            <person name="Matthews L."/>
            <person name="Matthews N.S.W."/>
            <person name="McLaren S."/>
            <person name="Milne S."/>
            <person name="Mistry S."/>
            <person name="Moore M.J.F."/>
            <person name="Nickerson T."/>
            <person name="O'Dell C.N."/>
            <person name="Oliver K."/>
            <person name="Palmeiri A."/>
            <person name="Palmer S.A."/>
            <person name="Parker A."/>
            <person name="Patel D."/>
            <person name="Pearce A.V."/>
            <person name="Peck A.I."/>
            <person name="Pelan S."/>
            <person name="Phelps K."/>
            <person name="Phillimore B.J."/>
            <person name="Plumb R."/>
            <person name="Rajan J."/>
            <person name="Raymond C."/>
            <person name="Rouse G."/>
            <person name="Saenphimmachak C."/>
            <person name="Sehra H.K."/>
            <person name="Sheridan E."/>
            <person name="Shownkeen R."/>
            <person name="Sims S."/>
            <person name="Skuce C.D."/>
            <person name="Smith M."/>
            <person name="Steward C."/>
            <person name="Subramanian S."/>
            <person name="Sycamore N."/>
            <person name="Tracey A."/>
            <person name="Tromans A."/>
            <person name="Van Helmond Z."/>
            <person name="Wall M."/>
            <person name="Wallis J.M."/>
            <person name="White S."/>
            <person name="Whitehead S.L."/>
            <person name="Wilkinson J.E."/>
            <person name="Willey D.L."/>
            <person name="Williams H."/>
            <person name="Wilming L."/>
            <person name="Wray P.W."/>
            <person name="Wu Z."/>
            <person name="Coulson A."/>
            <person name="Vaudin M."/>
            <person name="Sulston J.E."/>
            <person name="Durbin R.M."/>
            <person name="Hubbard T."/>
            <person name="Wooster R."/>
            <person name="Dunham I."/>
            <person name="Carter N.P."/>
            <person name="McVean G."/>
            <person name="Ross M.T."/>
            <person name="Harrow J."/>
            <person name="Olson M.V."/>
            <person name="Beck S."/>
            <person name="Rogers J."/>
            <person name="Bentley D.R."/>
        </authorList>
    </citation>
    <scope>NUCLEOTIDE SEQUENCE [LARGE SCALE GENOMIC DNA]</scope>
</reference>
<reference key="6">
    <citation type="submission" date="2005-09" db="EMBL/GenBank/DDBJ databases">
        <authorList>
            <person name="Mural R.J."/>
            <person name="Istrail S."/>
            <person name="Sutton G.G."/>
            <person name="Florea L."/>
            <person name="Halpern A.L."/>
            <person name="Mobarry C.M."/>
            <person name="Lippert R."/>
            <person name="Walenz B."/>
            <person name="Shatkay H."/>
            <person name="Dew I."/>
            <person name="Miller J.R."/>
            <person name="Flanigan M.J."/>
            <person name="Edwards N.J."/>
            <person name="Bolanos R."/>
            <person name="Fasulo D."/>
            <person name="Halldorsson B.V."/>
            <person name="Hannenhalli S."/>
            <person name="Turner R."/>
            <person name="Yooseph S."/>
            <person name="Lu F."/>
            <person name="Nusskern D.R."/>
            <person name="Shue B.C."/>
            <person name="Zheng X.H."/>
            <person name="Zhong F."/>
            <person name="Delcher A.L."/>
            <person name="Huson D.H."/>
            <person name="Kravitz S.A."/>
            <person name="Mouchard L."/>
            <person name="Reinert K."/>
            <person name="Remington K.A."/>
            <person name="Clark A.G."/>
            <person name="Waterman M.S."/>
            <person name="Eichler E.E."/>
            <person name="Adams M.D."/>
            <person name="Hunkapiller M.W."/>
            <person name="Myers E.W."/>
            <person name="Venter J.C."/>
        </authorList>
    </citation>
    <scope>NUCLEOTIDE SEQUENCE [LARGE SCALE GENOMIC DNA]</scope>
    <scope>VARIANT LEU-852</scope>
</reference>
<reference key="7">
    <citation type="journal article" date="2004" name="Genome Res.">
        <title>The status, quality, and expansion of the NIH full-length cDNA project: the Mammalian Gene Collection (MGC).</title>
        <authorList>
            <consortium name="The MGC Project Team"/>
        </authorList>
    </citation>
    <scope>NUCLEOTIDE SEQUENCE [LARGE SCALE MRNA]</scope>
    <source>
        <tissue>Eye</tissue>
    </source>
</reference>
<reference key="8">
    <citation type="journal article" date="2009" name="Matrix Biol.">
        <title>ECM1 interacts with fibulin-3 and the beta 3 chain of laminin 332 through its serum albumin subdomain-like 2 domain.</title>
        <authorList>
            <person name="Sercu S."/>
            <person name="Lambeir A.M."/>
            <person name="Steenackers E."/>
            <person name="El Ghalbzouri A."/>
            <person name="Geentjens K."/>
            <person name="Sasaki T."/>
            <person name="Oyama N."/>
            <person name="Merregaert J."/>
        </authorList>
    </citation>
    <scope>INTERACTION WITH ECM1</scope>
</reference>
<reference key="9">
    <citation type="journal article" date="2011" name="BMC Syst. Biol.">
        <title>Initial characterization of the human central proteome.</title>
        <authorList>
            <person name="Burkard T.R."/>
            <person name="Planyavsky M."/>
            <person name="Kaupe I."/>
            <person name="Breitwieser F.P."/>
            <person name="Buerckstuemmer T."/>
            <person name="Bennett K.L."/>
            <person name="Superti-Furga G."/>
            <person name="Colinge J."/>
        </authorList>
    </citation>
    <scope>IDENTIFICATION BY MASS SPECTROMETRY [LARGE SCALE ANALYSIS]</scope>
</reference>
<reference key="10">
    <citation type="journal article" date="2013" name="J. Dent. Res.">
        <title>LAMB3 mutations causing autosomal-dominant amelogenesis imperfecta.</title>
        <authorList>
            <person name="Kim J.W."/>
            <person name="Seymen F."/>
            <person name="Lee K.E."/>
            <person name="Ko J."/>
            <person name="Yildirim M."/>
            <person name="Tuna E.B."/>
            <person name="Gencay K."/>
            <person name="Shin T.J."/>
            <person name="Kyun H.K."/>
            <person name="Simmer J.P."/>
            <person name="Hu J.C."/>
        </authorList>
    </citation>
    <scope>INVOLVEMENT IN AI1A</scope>
</reference>
<reference key="11">
    <citation type="journal article" date="2014" name="Eur. J. Hum. Genet.">
        <title>Whole-exome sequencing, without prior linkage, identifies a mutation in LAMB3 as a cause of dominant hypoplastic amelogenesis imperfecta.</title>
        <authorList>
            <person name="Poulter J.A."/>
            <person name="El-Sayed W."/>
            <person name="Shore R.C."/>
            <person name="Kirkham J."/>
            <person name="Inglehearn C.F."/>
            <person name="Mighell A.J."/>
        </authorList>
    </citation>
    <scope>INVOLVEMENT IN AI1A</scope>
</reference>
<reference key="12">
    <citation type="journal article" date="1995" name="Hum. Mutat.">
        <title>Detection of sequence variants in the gene encoding the beta 3 chain of laminin 5 (LAMB3).</title>
        <authorList>
            <person name="Pulkkinen L."/>
            <person name="McGrath J.A."/>
            <person name="Christiano A.M."/>
            <person name="Uitto J."/>
        </authorList>
    </citation>
    <scope>VARIANT JEB1B LEU-679</scope>
</reference>
<reference key="13">
    <citation type="journal article" date="1998" name="Br. J. Dermatol.">
        <title>E210K mutation in the gene encoding the beta3 chain of laminin-5 (LAMB3) is predictive of a phenotype of generalized atrophic benign epidermolysis bullosa.</title>
        <authorList>
            <person name="Mellerio J.E."/>
            <person name="Eady R.A.J."/>
            <person name="Atherton D.J."/>
            <person name="Lake B.D."/>
            <person name="McGrath J.A."/>
        </authorList>
    </citation>
    <scope>VARIANT JEB1A LYS-210</scope>
</reference>
<reference key="14">
    <citation type="journal article" date="2006" name="Science">
        <title>The consensus coding sequences of human breast and colorectal cancers.</title>
        <authorList>
            <person name="Sjoeblom T."/>
            <person name="Jones S."/>
            <person name="Wood L.D."/>
            <person name="Parsons D.W."/>
            <person name="Lin J."/>
            <person name="Barber T.D."/>
            <person name="Mandelker D."/>
            <person name="Leary R.J."/>
            <person name="Ptak J."/>
            <person name="Silliman N."/>
            <person name="Szabo S."/>
            <person name="Buckhaults P."/>
            <person name="Farrell C."/>
            <person name="Meeh P."/>
            <person name="Markowitz S.D."/>
            <person name="Willis J."/>
            <person name="Dawson D."/>
            <person name="Willson J.K.V."/>
            <person name="Gazdar A.F."/>
            <person name="Hartigan J."/>
            <person name="Wu L."/>
            <person name="Liu C."/>
            <person name="Parmigiani G."/>
            <person name="Park B.H."/>
            <person name="Bachman K.E."/>
            <person name="Papadopoulos N."/>
            <person name="Vogelstein B."/>
            <person name="Kinzler K.W."/>
            <person name="Velculescu V.E."/>
        </authorList>
    </citation>
    <scope>VARIANT [LARGE SCALE ANALYSIS] CYS-450</scope>
</reference>
<reference key="15">
    <citation type="journal article" date="2007" name="J. Clin. Invest.">
        <title>Revertant mosaicism in junctional epidermolysis bullosa due to multiple correcting second-site mutations in LAMB3.</title>
        <authorList>
            <person name="Pasmooij A.M.G."/>
            <person name="Pas H.H."/>
            <person name="Bolling M.C."/>
            <person name="Jonkman M.F."/>
        </authorList>
    </citation>
    <scope>VARIANTS JEB1A ALA-199; GLN-207 AND LYS-210</scope>
</reference>
<comment type="function">
    <text>Binding to cells via a high affinity receptor, laminin is thought to mediate the attachment, migration and organization of cells into tissues during embryonic development by interacting with other extracellular matrix components.</text>
</comment>
<comment type="subunit">
    <text evidence="6">Laminin is a complex glycoprotein, consisting of three different polypeptide chains (alpha, beta, gamma), which are bound to each other by disulfide bonds into a cross-shaped molecule comprising one long and three short arms with globules at each end. Beta-3 is a subunit of laminin-5 (laminin-332 or epiligrin/kalinin/nicein). Interacts with ECM1.</text>
</comment>
<comment type="subcellular location">
    <subcellularLocation>
        <location>Secreted</location>
        <location>Extracellular space</location>
        <location>Extracellular matrix</location>
        <location>Basement membrane</location>
    </subcellularLocation>
</comment>
<comment type="tissue specificity">
    <text>Found in the basement membranes (major component).</text>
</comment>
<comment type="domain">
    <text>The alpha-helical domains I and II are thought to interact with other laminin chains to form a coiled coil structure.</text>
</comment>
<comment type="domain">
    <text>Domain VI is globular.</text>
</comment>
<comment type="disease" evidence="9">
    <disease id="DI-00457">
        <name>Epidermolysis bullosa, junctional 1B, severe</name>
        <acronym>JEB1B</acronym>
        <description>A form of epidermolysis bullosa, a genodermatosis characterized by recurrent blistering, fragility of the skin and mucosal epithelia, and erosions caused by minor mechanical trauma. Junctional epidermolysis bullosa is characterized by blistering that occurs at the level of the lamina lucida in the skin basement membrane. JEB1B is an autosomal recessive, severe form characterized by bullous lesions appearing at birth, and extensive denudation of skin and mucous membranes that may be hemorrhagic. Death occurs usually within the first six months of life. Occasionally, children survive to teens.</description>
        <dbReference type="MIM" id="226700"/>
    </disease>
    <text>The disease is caused by variants affecting the gene represented in this entry.</text>
</comment>
<comment type="disease" evidence="5 10">
    <disease id="DI-00502">
        <name>Epidermolysis bullosa, junctional 1A, intermediate</name>
        <acronym>JEB1A</acronym>
        <description>A form of epidermolysis bullosa, a genodermatosis characterized by recurrent blistering, fragility of the skin and mucosal epithelia, and erosions caused by minor mechanical trauma. Junctional epidermolysis bullosa is characterized by blistering that occurs at the level of the lamina lucida in the skin basement membrane. JEB1A is an autosomal recessive, non-lethal, adult form characterized by life-long blistering of the skin, associated with hair and tooth abnormalities.</description>
        <dbReference type="MIM" id="226650"/>
    </disease>
    <text>The disease is caused by variants affecting the gene represented in this entry.</text>
</comment>
<comment type="disease" evidence="7 8">
    <disease id="DI-04344">
        <name>Amelogenesis imperfecta 1A</name>
        <acronym>AI1A</acronym>
        <description>A form of amelogenesis imperfecta, a disorder characterized by defective enamel formation. The enamel may be hypoplastic, hypomineralized or both, and affected teeth may be discoloured, sensitive or prone to disintegration.</description>
        <dbReference type="MIM" id="104530"/>
    </disease>
    <text>The disease is caused by variants affecting the gene represented in this entry.</text>
</comment>
<organism>
    <name type="scientific">Homo sapiens</name>
    <name type="common">Human</name>
    <dbReference type="NCBI Taxonomy" id="9606"/>
    <lineage>
        <taxon>Eukaryota</taxon>
        <taxon>Metazoa</taxon>
        <taxon>Chordata</taxon>
        <taxon>Craniata</taxon>
        <taxon>Vertebrata</taxon>
        <taxon>Euteleostomi</taxon>
        <taxon>Mammalia</taxon>
        <taxon>Eutheria</taxon>
        <taxon>Euarchontoglires</taxon>
        <taxon>Primates</taxon>
        <taxon>Haplorrhini</taxon>
        <taxon>Catarrhini</taxon>
        <taxon>Hominidae</taxon>
        <taxon>Homo</taxon>
    </lineage>
</organism>
<keyword id="KW-0986">Amelogenesis imperfecta</keyword>
<keyword id="KW-0084">Basement membrane</keyword>
<keyword id="KW-0130">Cell adhesion</keyword>
<keyword id="KW-0175">Coiled coil</keyword>
<keyword id="KW-0903">Direct protein sequencing</keyword>
<keyword id="KW-0225">Disease variant</keyword>
<keyword id="KW-1015">Disulfide bond</keyword>
<keyword id="KW-0263">Epidermolysis bullosa</keyword>
<keyword id="KW-0272">Extracellular matrix</keyword>
<keyword id="KW-0325">Glycoprotein</keyword>
<keyword id="KW-0424">Laminin EGF-like domain</keyword>
<keyword id="KW-1267">Proteomics identification</keyword>
<keyword id="KW-1185">Reference proteome</keyword>
<keyword id="KW-0677">Repeat</keyword>
<keyword id="KW-0964">Secreted</keyword>
<keyword id="KW-0732">Signal</keyword>
<proteinExistence type="evidence at protein level"/>
<dbReference type="EMBL" id="L25541">
    <property type="protein sequence ID" value="AAA61834.1"/>
    <property type="molecule type" value="mRNA"/>
</dbReference>
<dbReference type="EMBL" id="U17760">
    <property type="protein sequence ID" value="AAC51352.1"/>
    <property type="molecule type" value="Genomic_DNA"/>
</dbReference>
<dbReference type="EMBL" id="U17745">
    <property type="protein sequence ID" value="AAC51352.1"/>
    <property type="status" value="JOINED"/>
    <property type="molecule type" value="Genomic_DNA"/>
</dbReference>
<dbReference type="EMBL" id="U17746">
    <property type="protein sequence ID" value="AAC51352.1"/>
    <property type="status" value="JOINED"/>
    <property type="molecule type" value="Genomic_DNA"/>
</dbReference>
<dbReference type="EMBL" id="U17747">
    <property type="protein sequence ID" value="AAC51352.1"/>
    <property type="status" value="JOINED"/>
    <property type="molecule type" value="Genomic_DNA"/>
</dbReference>
<dbReference type="EMBL" id="U17748">
    <property type="protein sequence ID" value="AAC51352.1"/>
    <property type="status" value="JOINED"/>
    <property type="molecule type" value="Genomic_DNA"/>
</dbReference>
<dbReference type="EMBL" id="U17749">
    <property type="protein sequence ID" value="AAC51352.1"/>
    <property type="status" value="JOINED"/>
    <property type="molecule type" value="Genomic_DNA"/>
</dbReference>
<dbReference type="EMBL" id="U17750">
    <property type="protein sequence ID" value="AAC51352.1"/>
    <property type="status" value="JOINED"/>
    <property type="molecule type" value="Genomic_DNA"/>
</dbReference>
<dbReference type="EMBL" id="U17751">
    <property type="protein sequence ID" value="AAC51352.1"/>
    <property type="status" value="JOINED"/>
    <property type="molecule type" value="Genomic_DNA"/>
</dbReference>
<dbReference type="EMBL" id="U17752">
    <property type="protein sequence ID" value="AAC51352.1"/>
    <property type="status" value="JOINED"/>
    <property type="molecule type" value="Genomic_DNA"/>
</dbReference>
<dbReference type="EMBL" id="U17753">
    <property type="protein sequence ID" value="AAC51352.1"/>
    <property type="status" value="JOINED"/>
    <property type="molecule type" value="Genomic_DNA"/>
</dbReference>
<dbReference type="EMBL" id="U17754">
    <property type="protein sequence ID" value="AAC51352.1"/>
    <property type="status" value="JOINED"/>
    <property type="molecule type" value="Genomic_DNA"/>
</dbReference>
<dbReference type="EMBL" id="U17755">
    <property type="protein sequence ID" value="AAC51352.1"/>
    <property type="status" value="JOINED"/>
    <property type="molecule type" value="Genomic_DNA"/>
</dbReference>
<dbReference type="EMBL" id="U17756">
    <property type="protein sequence ID" value="AAC51352.1"/>
    <property type="status" value="JOINED"/>
    <property type="molecule type" value="Genomic_DNA"/>
</dbReference>
<dbReference type="EMBL" id="U17757">
    <property type="protein sequence ID" value="AAC51352.1"/>
    <property type="status" value="JOINED"/>
    <property type="molecule type" value="Genomic_DNA"/>
</dbReference>
<dbReference type="EMBL" id="U17758">
    <property type="protein sequence ID" value="AAC51352.1"/>
    <property type="status" value="JOINED"/>
    <property type="molecule type" value="Genomic_DNA"/>
</dbReference>
<dbReference type="EMBL" id="U17759">
    <property type="protein sequence ID" value="AAC51352.1"/>
    <property type="status" value="JOINED"/>
    <property type="molecule type" value="Genomic_DNA"/>
</dbReference>
<dbReference type="EMBL" id="D37766">
    <property type="protein sequence ID" value="BAA22263.1"/>
    <property type="molecule type" value="mRNA"/>
</dbReference>
<dbReference type="EMBL" id="AY035783">
    <property type="protein sequence ID" value="AAK61364.1"/>
    <property type="molecule type" value="mRNA"/>
</dbReference>
<dbReference type="EMBL" id="AL023754">
    <property type="status" value="NOT_ANNOTATED_CDS"/>
    <property type="molecule type" value="Genomic_DNA"/>
</dbReference>
<dbReference type="EMBL" id="AL031316">
    <property type="status" value="NOT_ANNOTATED_CDS"/>
    <property type="molecule type" value="Genomic_DNA"/>
</dbReference>
<dbReference type="EMBL" id="CH471100">
    <property type="protein sequence ID" value="EAW93448.1"/>
    <property type="molecule type" value="Genomic_DNA"/>
</dbReference>
<dbReference type="EMBL" id="CH471100">
    <property type="protein sequence ID" value="EAW93449.1"/>
    <property type="molecule type" value="Genomic_DNA"/>
</dbReference>
<dbReference type="EMBL" id="BC075838">
    <property type="protein sequence ID" value="AAH75838.1"/>
    <property type="molecule type" value="mRNA"/>
</dbReference>
<dbReference type="CCDS" id="CCDS1487.1"/>
<dbReference type="PIR" id="A53612">
    <property type="entry name" value="A53612"/>
</dbReference>
<dbReference type="RefSeq" id="NP_000219.2">
    <property type="nucleotide sequence ID" value="NM_000228.3"/>
</dbReference>
<dbReference type="RefSeq" id="NP_001017402.1">
    <property type="nucleotide sequence ID" value="NM_001017402.2"/>
</dbReference>
<dbReference type="RefSeq" id="NP_001121113.1">
    <property type="nucleotide sequence ID" value="NM_001127641.1"/>
</dbReference>
<dbReference type="RefSeq" id="XP_005273181.1">
    <property type="nucleotide sequence ID" value="XM_005273124.5"/>
</dbReference>
<dbReference type="RefSeq" id="XP_054192516.1">
    <property type="nucleotide sequence ID" value="XM_054336541.1"/>
</dbReference>
<dbReference type="RefSeq" id="XP_054192517.1">
    <property type="nucleotide sequence ID" value="XM_054336542.1"/>
</dbReference>
<dbReference type="SMR" id="Q13751"/>
<dbReference type="BioGRID" id="110108">
    <property type="interactions" value="156"/>
</dbReference>
<dbReference type="ComplexPortal" id="CPX-1774">
    <property type="entry name" value="Laminin-332 complex variant A"/>
</dbReference>
<dbReference type="ComplexPortal" id="CPX-3165">
    <property type="entry name" value="Laminin-332 complex variant B"/>
</dbReference>
<dbReference type="FunCoup" id="Q13751">
    <property type="interactions" value="531"/>
</dbReference>
<dbReference type="IntAct" id="Q13751">
    <property type="interactions" value="73"/>
</dbReference>
<dbReference type="MINT" id="Q13751"/>
<dbReference type="STRING" id="9606.ENSP00000375778"/>
<dbReference type="ChEMBL" id="CHEMBL2364187"/>
<dbReference type="GlyCosmos" id="Q13751">
    <property type="glycosylation" value="3 sites, No reported glycans"/>
</dbReference>
<dbReference type="GlyGen" id="Q13751">
    <property type="glycosylation" value="6 sites, 3 N-linked glycans (2 sites), 2 O-linked glycans (3 sites)"/>
</dbReference>
<dbReference type="iPTMnet" id="Q13751"/>
<dbReference type="MetOSite" id="Q13751"/>
<dbReference type="PhosphoSitePlus" id="Q13751"/>
<dbReference type="SwissPalm" id="Q13751"/>
<dbReference type="BioMuta" id="LAMB3"/>
<dbReference type="DMDM" id="2497600"/>
<dbReference type="jPOST" id="Q13751"/>
<dbReference type="MassIVE" id="Q13751"/>
<dbReference type="PaxDb" id="9606-ENSP00000375778"/>
<dbReference type="PeptideAtlas" id="Q13751"/>
<dbReference type="ProteomicsDB" id="59674"/>
<dbReference type="Pumba" id="Q13751"/>
<dbReference type="Antibodypedia" id="1958">
    <property type="antibodies" value="391 antibodies from 28 providers"/>
</dbReference>
<dbReference type="DNASU" id="3914"/>
<dbReference type="Ensembl" id="ENST00000356082.9">
    <property type="protein sequence ID" value="ENSP00000348384.3"/>
    <property type="gene ID" value="ENSG00000196878.15"/>
</dbReference>
<dbReference type="Ensembl" id="ENST00000367030.7">
    <property type="protein sequence ID" value="ENSP00000355997.3"/>
    <property type="gene ID" value="ENSG00000196878.15"/>
</dbReference>
<dbReference type="Ensembl" id="ENST00000391911.5">
    <property type="protein sequence ID" value="ENSP00000375778.1"/>
    <property type="gene ID" value="ENSG00000196878.15"/>
</dbReference>
<dbReference type="GeneID" id="3914"/>
<dbReference type="KEGG" id="hsa:3914"/>
<dbReference type="MANE-Select" id="ENST00000356082.9">
    <property type="protein sequence ID" value="ENSP00000348384.3"/>
    <property type="RefSeq nucleotide sequence ID" value="NM_000228.3"/>
    <property type="RefSeq protein sequence ID" value="NP_000219.2"/>
</dbReference>
<dbReference type="UCSC" id="uc001hhg.4">
    <property type="organism name" value="human"/>
</dbReference>
<dbReference type="AGR" id="HGNC:6490"/>
<dbReference type="CTD" id="3914"/>
<dbReference type="DisGeNET" id="3914"/>
<dbReference type="GeneCards" id="LAMB3"/>
<dbReference type="GeneReviews" id="LAMB3"/>
<dbReference type="HGNC" id="HGNC:6490">
    <property type="gene designation" value="LAMB3"/>
</dbReference>
<dbReference type="HPA" id="ENSG00000196878">
    <property type="expression patterns" value="Tissue enhanced (stomach, urinary bladder)"/>
</dbReference>
<dbReference type="MalaCards" id="LAMB3"/>
<dbReference type="MIM" id="104530">
    <property type="type" value="phenotype"/>
</dbReference>
<dbReference type="MIM" id="150310">
    <property type="type" value="gene"/>
</dbReference>
<dbReference type="MIM" id="226650">
    <property type="type" value="phenotype"/>
</dbReference>
<dbReference type="MIM" id="226700">
    <property type="type" value="phenotype"/>
</dbReference>
<dbReference type="neXtProt" id="NX_Q13751"/>
<dbReference type="OpenTargets" id="ENSG00000196878"/>
<dbReference type="Orphanet" id="100031">
    <property type="disease" value="Hypoplastic amelogenesis imperfecta"/>
</dbReference>
<dbReference type="Orphanet" id="79402">
    <property type="disease" value="Intermediate generalized junctional epidermolysis bullosa"/>
</dbReference>
<dbReference type="Orphanet" id="79404">
    <property type="disease" value="Severe generalized junctional epidermolysis bullosa"/>
</dbReference>
<dbReference type="PharmGKB" id="PA30278"/>
<dbReference type="VEuPathDB" id="HostDB:ENSG00000196878"/>
<dbReference type="eggNOG" id="KOG0994">
    <property type="taxonomic scope" value="Eukaryota"/>
</dbReference>
<dbReference type="GeneTree" id="ENSGT00940000160731"/>
<dbReference type="HOGENOM" id="CLU_001560_0_0_1"/>
<dbReference type="InParanoid" id="Q13751"/>
<dbReference type="OMA" id="NKREQFE"/>
<dbReference type="OrthoDB" id="8545473at2759"/>
<dbReference type="PAN-GO" id="Q13751">
    <property type="GO annotations" value="7 GO annotations based on evolutionary models"/>
</dbReference>
<dbReference type="PhylomeDB" id="Q13751"/>
<dbReference type="TreeFam" id="TF352481"/>
<dbReference type="PathwayCommons" id="Q13751"/>
<dbReference type="Reactome" id="R-HSA-1474228">
    <property type="pathway name" value="Degradation of the extracellular matrix"/>
</dbReference>
<dbReference type="Reactome" id="R-HSA-2022090">
    <property type="pathway name" value="Assembly of collagen fibrils and other multimeric structures"/>
</dbReference>
<dbReference type="Reactome" id="R-HSA-2214320">
    <property type="pathway name" value="Anchoring fibril formation"/>
</dbReference>
<dbReference type="Reactome" id="R-HSA-3000157">
    <property type="pathway name" value="Laminin interactions"/>
</dbReference>
<dbReference type="Reactome" id="R-HSA-3000171">
    <property type="pathway name" value="Non-integrin membrane-ECM interactions"/>
</dbReference>
<dbReference type="Reactome" id="R-HSA-446107">
    <property type="pathway name" value="Type I hemidesmosome assembly"/>
</dbReference>
<dbReference type="Reactome" id="R-HSA-8874081">
    <property type="pathway name" value="MET activates PTK2 signaling"/>
</dbReference>
<dbReference type="Reactome" id="R-HSA-9913351">
    <property type="pathway name" value="Formation of the dystrophin-glycoprotein complex (DGC)"/>
</dbReference>
<dbReference type="SignaLink" id="Q13751"/>
<dbReference type="SIGNOR" id="Q13751"/>
<dbReference type="BioGRID-ORCS" id="3914">
    <property type="hits" value="18 hits in 1158 CRISPR screens"/>
</dbReference>
<dbReference type="ChiTaRS" id="LAMB3">
    <property type="organism name" value="human"/>
</dbReference>
<dbReference type="GeneWiki" id="Laminin,_beta_3"/>
<dbReference type="GenomeRNAi" id="3914"/>
<dbReference type="Pharos" id="Q13751">
    <property type="development level" value="Tbio"/>
</dbReference>
<dbReference type="PRO" id="PR:Q13751"/>
<dbReference type="Proteomes" id="UP000005640">
    <property type="component" value="Chromosome 1"/>
</dbReference>
<dbReference type="RNAct" id="Q13751">
    <property type="molecule type" value="protein"/>
</dbReference>
<dbReference type="Bgee" id="ENSG00000196878">
    <property type="expression patterns" value="Expressed in cartilage tissue and 135 other cell types or tissues"/>
</dbReference>
<dbReference type="ExpressionAtlas" id="Q13751">
    <property type="expression patterns" value="baseline and differential"/>
</dbReference>
<dbReference type="GO" id="GO:0062023">
    <property type="term" value="C:collagen-containing extracellular matrix"/>
    <property type="evidence" value="ECO:0007005"/>
    <property type="project" value="BHF-UCL"/>
</dbReference>
<dbReference type="GO" id="GO:0005576">
    <property type="term" value="C:extracellular region"/>
    <property type="evidence" value="ECO:0000304"/>
    <property type="project" value="Reactome"/>
</dbReference>
<dbReference type="GO" id="GO:0005610">
    <property type="term" value="C:laminin-5 complex"/>
    <property type="evidence" value="ECO:0007669"/>
    <property type="project" value="Ensembl"/>
</dbReference>
<dbReference type="GO" id="GO:0005198">
    <property type="term" value="F:structural molecule activity"/>
    <property type="evidence" value="ECO:0000303"/>
    <property type="project" value="ProtInc"/>
</dbReference>
<dbReference type="GO" id="GO:0050873">
    <property type="term" value="P:brown fat cell differentiation"/>
    <property type="evidence" value="ECO:0007669"/>
    <property type="project" value="Ensembl"/>
</dbReference>
<dbReference type="GO" id="GO:0007155">
    <property type="term" value="P:cell adhesion"/>
    <property type="evidence" value="ECO:0007669"/>
    <property type="project" value="UniProtKB-KW"/>
</dbReference>
<dbReference type="GO" id="GO:0035987">
    <property type="term" value="P:endodermal cell differentiation"/>
    <property type="evidence" value="ECO:0000270"/>
    <property type="project" value="UniProtKB"/>
</dbReference>
<dbReference type="GO" id="GO:0008544">
    <property type="term" value="P:epidermis development"/>
    <property type="evidence" value="ECO:0000304"/>
    <property type="project" value="ProtInc"/>
</dbReference>
<dbReference type="CDD" id="cd22303">
    <property type="entry name" value="cc_LAMB3_C"/>
    <property type="match status" value="1"/>
</dbReference>
<dbReference type="CDD" id="cd00055">
    <property type="entry name" value="EGF_Lam"/>
    <property type="match status" value="6"/>
</dbReference>
<dbReference type="FunFam" id="2.10.25.10:FF:000034">
    <property type="entry name" value="Laminin subunit alpha 3"/>
    <property type="match status" value="1"/>
</dbReference>
<dbReference type="FunFam" id="2.10.25.10:FF:000084">
    <property type="entry name" value="Laminin subunit alpha 3"/>
    <property type="match status" value="1"/>
</dbReference>
<dbReference type="FunFam" id="2.10.25.10:FF:000101">
    <property type="entry name" value="Laminin subunit beta 1"/>
    <property type="match status" value="1"/>
</dbReference>
<dbReference type="FunFam" id="2.10.25.10:FF:000440">
    <property type="entry name" value="Laminin subunit beta 3"/>
    <property type="match status" value="1"/>
</dbReference>
<dbReference type="FunFam" id="2.60.120.260:FF:000073">
    <property type="entry name" value="Laminin subunit beta 3"/>
    <property type="match status" value="1"/>
</dbReference>
<dbReference type="FunFam" id="2.170.300.10:FF:000001">
    <property type="entry name" value="Laminin subunit beta-1"/>
    <property type="match status" value="1"/>
</dbReference>
<dbReference type="FunFam" id="2.10.25.10:FF:000166">
    <property type="entry name" value="laminin subunit gamma-1"/>
    <property type="match status" value="1"/>
</dbReference>
<dbReference type="Gene3D" id="2.60.120.260">
    <property type="entry name" value="Galactose-binding domain-like"/>
    <property type="match status" value="1"/>
</dbReference>
<dbReference type="Gene3D" id="2.10.25.10">
    <property type="entry name" value="Laminin"/>
    <property type="match status" value="4"/>
</dbReference>
<dbReference type="Gene3D" id="2.170.300.10">
    <property type="entry name" value="Tie2 ligand-binding domain superfamily"/>
    <property type="match status" value="1"/>
</dbReference>
<dbReference type="InterPro" id="IPR000742">
    <property type="entry name" value="EGF-like_dom"/>
</dbReference>
<dbReference type="InterPro" id="IPR056558">
    <property type="entry name" value="LAMB1-4_helical"/>
</dbReference>
<dbReference type="InterPro" id="IPR050440">
    <property type="entry name" value="Laminin/Netrin_ECM"/>
</dbReference>
<dbReference type="InterPro" id="IPR008211">
    <property type="entry name" value="Laminin_N"/>
</dbReference>
<dbReference type="InterPro" id="IPR002049">
    <property type="entry name" value="LE_dom"/>
</dbReference>
<dbReference type="InterPro" id="IPR056863">
    <property type="entry name" value="LMN_ATRN_NET-like_EGF"/>
</dbReference>
<dbReference type="PANTHER" id="PTHR10574:SF268">
    <property type="entry name" value="LAMININ SUBUNIT BETA-3"/>
    <property type="match status" value="1"/>
</dbReference>
<dbReference type="PANTHER" id="PTHR10574">
    <property type="entry name" value="NETRIN/LAMININ-RELATED"/>
    <property type="match status" value="1"/>
</dbReference>
<dbReference type="Pfam" id="PF00053">
    <property type="entry name" value="EGF_laminin"/>
    <property type="match status" value="5"/>
</dbReference>
<dbReference type="Pfam" id="PF24973">
    <property type="entry name" value="EGF_LMN_ATRN"/>
    <property type="match status" value="1"/>
</dbReference>
<dbReference type="Pfam" id="PF23219">
    <property type="entry name" value="LAMB1"/>
    <property type="match status" value="1"/>
</dbReference>
<dbReference type="Pfam" id="PF00055">
    <property type="entry name" value="Laminin_N"/>
    <property type="match status" value="1"/>
</dbReference>
<dbReference type="PRINTS" id="PR00011">
    <property type="entry name" value="EGFLAMININ"/>
</dbReference>
<dbReference type="SMART" id="SM00180">
    <property type="entry name" value="EGF_Lam"/>
    <property type="match status" value="6"/>
</dbReference>
<dbReference type="SMART" id="SM00136">
    <property type="entry name" value="LamNT"/>
    <property type="match status" value="1"/>
</dbReference>
<dbReference type="SUPFAM" id="SSF57196">
    <property type="entry name" value="EGF/Laminin"/>
    <property type="match status" value="6"/>
</dbReference>
<dbReference type="PROSITE" id="PS00022">
    <property type="entry name" value="EGF_1"/>
    <property type="match status" value="5"/>
</dbReference>
<dbReference type="PROSITE" id="PS01186">
    <property type="entry name" value="EGF_2"/>
    <property type="match status" value="1"/>
</dbReference>
<dbReference type="PROSITE" id="PS01248">
    <property type="entry name" value="EGF_LAM_1"/>
    <property type="match status" value="5"/>
</dbReference>
<dbReference type="PROSITE" id="PS50027">
    <property type="entry name" value="EGF_LAM_2"/>
    <property type="match status" value="6"/>
</dbReference>
<dbReference type="PROSITE" id="PS51117">
    <property type="entry name" value="LAMININ_NTER"/>
    <property type="match status" value="1"/>
</dbReference>
<name>LAMB3_HUMAN</name>
<accession>Q13751</accession>
<accession>D3DT88</accession>
<accession>O14947</accession>
<accession>Q14733</accession>
<accession>Q9UJK4</accession>
<accession>Q9UJL1</accession>
<protein>
    <recommendedName>
        <fullName>Laminin subunit beta-3</fullName>
    </recommendedName>
    <alternativeName>
        <fullName>Epiligrin subunit bata</fullName>
    </alternativeName>
    <alternativeName>
        <fullName>Kalinin B1 chain</fullName>
    </alternativeName>
    <alternativeName>
        <fullName>Kalinin subunit beta</fullName>
    </alternativeName>
    <alternativeName>
        <fullName>Laminin B1k chain</fullName>
    </alternativeName>
    <alternativeName>
        <fullName>Laminin-5 subunit beta</fullName>
    </alternativeName>
    <alternativeName>
        <fullName>Nicein subunit beta</fullName>
    </alternativeName>
</protein>